<feature type="transit peptide" description="Mitochondrion" evidence="3">
    <location>
        <begin position="1"/>
        <end status="unknown"/>
    </location>
</feature>
<feature type="chain" id="PRO_0000026780" description="Mitochondrial-processing peptidase subunit beta">
    <location>
        <begin status="unknown"/>
        <end position="465"/>
    </location>
</feature>
<feature type="active site" description="Proton acceptor" evidence="1">
    <location>
        <position position="82"/>
    </location>
</feature>
<feature type="binding site" evidence="1">
    <location>
        <position position="79"/>
    </location>
    <ligand>
        <name>Zn(2+)</name>
        <dbReference type="ChEBI" id="CHEBI:29105"/>
    </ligand>
</feature>
<feature type="binding site" evidence="1">
    <location>
        <position position="83"/>
    </location>
    <ligand>
        <name>Zn(2+)</name>
        <dbReference type="ChEBI" id="CHEBI:29105"/>
    </ligand>
</feature>
<feature type="binding site" evidence="1">
    <location>
        <position position="159"/>
    </location>
    <ligand>
        <name>Zn(2+)</name>
        <dbReference type="ChEBI" id="CHEBI:29105"/>
    </ligand>
</feature>
<reference key="1">
    <citation type="journal article" date="1998" name="J. Bacteriol.">
        <title>Isolation, characterization, and expression of the gene encoding the beta subunit of the mitochondrial processing peptidase from Blastocladiella emersonii.</title>
        <authorList>
            <person name="Costa-Rocha C.R."/>
            <person name="Lopes-Gomes S."/>
        </authorList>
    </citation>
    <scope>NUCLEOTIDE SEQUENCE [GENOMIC DNA]</scope>
</reference>
<organism>
    <name type="scientific">Blastocladiella emersonii</name>
    <name type="common">Aquatic fungus</name>
    <dbReference type="NCBI Taxonomy" id="4808"/>
    <lineage>
        <taxon>Eukaryota</taxon>
        <taxon>Fungi</taxon>
        <taxon>Fungi incertae sedis</taxon>
        <taxon>Blastocladiomycota</taxon>
        <taxon>Blastocladiomycetes</taxon>
        <taxon>Blastocladiales</taxon>
        <taxon>Blastocladiaceae</taxon>
        <taxon>Blastocladiella</taxon>
    </lineage>
</organism>
<sequence>MLSAALRLTAKRNVRSLATASSSSYPGALLNVPKTQVTRLPNGLTVATESNPALATATVGVWIDSGSRAETKANNGVAHFLEHISFKGTKQRTQSGLEIEIENMGGHLNAYTSREQTVYYAKLFSQDVAKGVNILGDILQNSTLDPGAIDRERAVILREAEEVDKQVEEVVFDHLHAAAFPENALGYTILGPKENIQTLSQADLQAYIKNNYTADRMVVVGAGNVDHAELCKLAETNFGKLPQGSGKAKFVRPAFTGSDVRIRVDDMPTAHIALAVEGASWTSADHWPLLVASAMIGSYDRAAGNAHPSSKLAQIVAKHNLANSFTSFNTTYSDTGLWGIYIQSNNRDNLDDLAHFTVREWMRLATAPSEGEVAIAKQQLKTSLLLALDGTTPVAEEIGRQMLAYGRRLSPFEIDRLVDAVTVEDVKRVANEFIYDRDLAIVAVGPVECLPDYNRIRSAMNLLRY</sequence>
<protein>
    <recommendedName>
        <fullName>Mitochondrial-processing peptidase subunit beta</fullName>
        <ecNumber evidence="1">3.4.24.64</ecNumber>
    </recommendedName>
    <alternativeName>
        <fullName>BeMPP1</fullName>
    </alternativeName>
    <alternativeName>
        <fullName>Beta-MPP</fullName>
    </alternativeName>
</protein>
<proteinExistence type="inferred from homology"/>
<accession>Q00302</accession>
<gene>
    <name type="primary">MPP1</name>
</gene>
<dbReference type="EC" id="3.4.24.64" evidence="1"/>
<dbReference type="EMBL" id="U41300">
    <property type="protein sequence ID" value="AAC63093.1"/>
    <property type="molecule type" value="Genomic_DNA"/>
</dbReference>
<dbReference type="SMR" id="Q00302"/>
<dbReference type="MEROPS" id="M16.980"/>
<dbReference type="GO" id="GO:0005759">
    <property type="term" value="C:mitochondrial matrix"/>
    <property type="evidence" value="ECO:0007669"/>
    <property type="project" value="UniProtKB-SubCell"/>
</dbReference>
<dbReference type="GO" id="GO:0046872">
    <property type="term" value="F:metal ion binding"/>
    <property type="evidence" value="ECO:0007669"/>
    <property type="project" value="UniProtKB-KW"/>
</dbReference>
<dbReference type="GO" id="GO:0004222">
    <property type="term" value="F:metalloendopeptidase activity"/>
    <property type="evidence" value="ECO:0007669"/>
    <property type="project" value="UniProtKB-EC"/>
</dbReference>
<dbReference type="GO" id="GO:0006627">
    <property type="term" value="P:protein processing involved in protein targeting to mitochondrion"/>
    <property type="evidence" value="ECO:0007669"/>
    <property type="project" value="TreeGrafter"/>
</dbReference>
<dbReference type="FunFam" id="3.30.830.10:FF:000002">
    <property type="entry name" value="Mitochondrial-processing peptidase subunit beta"/>
    <property type="match status" value="1"/>
</dbReference>
<dbReference type="FunFam" id="3.30.830.10:FF:000001">
    <property type="entry name" value="Mitochondrial-processing peptidase subunit beta, mitochondrial"/>
    <property type="match status" value="1"/>
</dbReference>
<dbReference type="Gene3D" id="3.30.830.10">
    <property type="entry name" value="Metalloenzyme, LuxS/M16 peptidase-like"/>
    <property type="match status" value="2"/>
</dbReference>
<dbReference type="InterPro" id="IPR011249">
    <property type="entry name" value="Metalloenz_LuxS/M16"/>
</dbReference>
<dbReference type="InterPro" id="IPR050361">
    <property type="entry name" value="MPP/UQCRC_Complex"/>
</dbReference>
<dbReference type="InterPro" id="IPR011765">
    <property type="entry name" value="Pept_M16_N"/>
</dbReference>
<dbReference type="InterPro" id="IPR007863">
    <property type="entry name" value="Peptidase_M16_C"/>
</dbReference>
<dbReference type="PANTHER" id="PTHR11851:SF149">
    <property type="entry name" value="GH01077P"/>
    <property type="match status" value="1"/>
</dbReference>
<dbReference type="PANTHER" id="PTHR11851">
    <property type="entry name" value="METALLOPROTEASE"/>
    <property type="match status" value="1"/>
</dbReference>
<dbReference type="Pfam" id="PF00675">
    <property type="entry name" value="Peptidase_M16"/>
    <property type="match status" value="1"/>
</dbReference>
<dbReference type="Pfam" id="PF05193">
    <property type="entry name" value="Peptidase_M16_C"/>
    <property type="match status" value="1"/>
</dbReference>
<dbReference type="SUPFAM" id="SSF63411">
    <property type="entry name" value="LuxS/MPP-like metallohydrolase"/>
    <property type="match status" value="2"/>
</dbReference>
<name>MPPB_BLAEM</name>
<keyword id="KW-0378">Hydrolase</keyword>
<keyword id="KW-0479">Metal-binding</keyword>
<keyword id="KW-0482">Metalloprotease</keyword>
<keyword id="KW-0496">Mitochondrion</keyword>
<keyword id="KW-0645">Protease</keyword>
<keyword id="KW-0809">Transit peptide</keyword>
<keyword id="KW-0862">Zinc</keyword>
<evidence type="ECO:0000250" key="1">
    <source>
        <dbReference type="UniProtKB" id="P10507"/>
    </source>
</evidence>
<evidence type="ECO:0000250" key="2">
    <source>
        <dbReference type="UniProtKB" id="Q03346"/>
    </source>
</evidence>
<evidence type="ECO:0000255" key="3"/>
<evidence type="ECO:0000305" key="4"/>
<comment type="function">
    <text evidence="1 2">Catalytic subunit of the essential mitochondrial processing protease (MPP), which cleaves the mitochondrial sequence off newly imported precursors proteins (By similarity). Preferentially, cleaves after an arginine at position P2 (By similarity).</text>
</comment>
<comment type="catalytic activity">
    <reaction evidence="1">
        <text>Release of N-terminal transit peptides from precursor proteins imported into the mitochondrion, typically with Arg in position P2.</text>
        <dbReference type="EC" id="3.4.24.64"/>
    </reaction>
</comment>
<comment type="cofactor">
    <cofactor evidence="1">
        <name>Zn(2+)</name>
        <dbReference type="ChEBI" id="CHEBI:29105"/>
    </cofactor>
    <text evidence="1">Binds 1 zinc ion per subunit.</text>
</comment>
<comment type="activity regulation">
    <text evidence="1">Binding to the alpha subunit is required for catalytic activity.</text>
</comment>
<comment type="subunit">
    <text evidence="1">Heterodimer of an alpha subunit and a beta subunit subunits, forming the mitochondrial processing protease (MPP) in which the alpha subunit is involved in substrate recognition and binding and the beta subunit is the catalytic subunit.</text>
</comment>
<comment type="subcellular location">
    <subcellularLocation>
        <location evidence="1">Mitochondrion matrix</location>
    </subcellularLocation>
</comment>
<comment type="similarity">
    <text evidence="4">Belongs to the peptidase M16 family.</text>
</comment>